<accession>E7CLN8</accession>
<comment type="function">
    <text evidence="1">Alpha toxins bind voltage-independently at site-3 of sodium channels (Nav) and inhibits the inactivation of the activated channels, thereby blocking neuronal transmission.</text>
</comment>
<comment type="subcellular location">
    <subcellularLocation>
        <location evidence="2">Secreted</location>
    </subcellularLocation>
</comment>
<comment type="tissue specificity">
    <text evidence="6">Expressed by the venom gland.</text>
</comment>
<comment type="domain">
    <text evidence="5">Has the structural arrangement of an alpha-helix connected to antiparallel beta-sheets by disulfide bonds (CS-alpha/beta).</text>
</comment>
<comment type="similarity">
    <text evidence="3">Belongs to the long (4 C-C) scorpion toxin superfamily. Sodium channel inhibitor family. Alpha subfamily.</text>
</comment>
<dbReference type="EMBL" id="HM233947">
    <property type="protein sequence ID" value="ADV16825.1"/>
    <property type="molecule type" value="mRNA"/>
</dbReference>
<dbReference type="SMR" id="E7CLN8"/>
<dbReference type="GO" id="GO:0005576">
    <property type="term" value="C:extracellular region"/>
    <property type="evidence" value="ECO:0007669"/>
    <property type="project" value="UniProtKB-SubCell"/>
</dbReference>
<dbReference type="GO" id="GO:0019871">
    <property type="term" value="F:sodium channel inhibitor activity"/>
    <property type="evidence" value="ECO:0007669"/>
    <property type="project" value="InterPro"/>
</dbReference>
<dbReference type="GO" id="GO:0090729">
    <property type="term" value="F:toxin activity"/>
    <property type="evidence" value="ECO:0007669"/>
    <property type="project" value="UniProtKB-KW"/>
</dbReference>
<dbReference type="GO" id="GO:0006952">
    <property type="term" value="P:defense response"/>
    <property type="evidence" value="ECO:0007669"/>
    <property type="project" value="InterPro"/>
</dbReference>
<dbReference type="CDD" id="cd23106">
    <property type="entry name" value="neurotoxins_LC_scorpion"/>
    <property type="match status" value="1"/>
</dbReference>
<dbReference type="Gene3D" id="3.30.30.10">
    <property type="entry name" value="Knottin, scorpion toxin-like"/>
    <property type="match status" value="1"/>
</dbReference>
<dbReference type="InterPro" id="IPR044062">
    <property type="entry name" value="LCN-type_CS_alpha_beta_dom"/>
</dbReference>
<dbReference type="InterPro" id="IPR003614">
    <property type="entry name" value="Scorpion_toxin-like"/>
</dbReference>
<dbReference type="InterPro" id="IPR036574">
    <property type="entry name" value="Scorpion_toxin-like_sf"/>
</dbReference>
<dbReference type="InterPro" id="IPR018218">
    <property type="entry name" value="Scorpion_toxinL"/>
</dbReference>
<dbReference type="InterPro" id="IPR002061">
    <property type="entry name" value="Scorpion_toxinL/defensin"/>
</dbReference>
<dbReference type="Pfam" id="PF00537">
    <property type="entry name" value="Toxin_3"/>
    <property type="match status" value="1"/>
</dbReference>
<dbReference type="PRINTS" id="PR00285">
    <property type="entry name" value="SCORPNTOXIN"/>
</dbReference>
<dbReference type="SMART" id="SM00505">
    <property type="entry name" value="Knot1"/>
    <property type="match status" value="1"/>
</dbReference>
<dbReference type="SUPFAM" id="SSF57095">
    <property type="entry name" value="Scorpion toxin-like"/>
    <property type="match status" value="1"/>
</dbReference>
<dbReference type="PROSITE" id="PS51863">
    <property type="entry name" value="LCN_CSAB"/>
    <property type="match status" value="1"/>
</dbReference>
<keyword id="KW-1015">Disulfide bond</keyword>
<keyword id="KW-0872">Ion channel impairing toxin</keyword>
<keyword id="KW-0528">Neurotoxin</keyword>
<keyword id="KW-0964">Secreted</keyword>
<keyword id="KW-0800">Toxin</keyword>
<keyword id="KW-0738">Voltage-gated sodium channel impairing toxin</keyword>
<proteinExistence type="evidence at transcript level"/>
<reference key="1">
    <citation type="journal article" date="2011" name="Toxicon">
        <title>Biochemical and molecular characterization of the venom from the Cuban scorpion Rhopalurus junceus.</title>
        <authorList>
            <person name="Garcia-Gomez B.I."/>
            <person name="Coronas F.I."/>
            <person name="Restano-Cassulini R."/>
            <person name="Rodriguez R.R."/>
            <person name="Possani L.D."/>
        </authorList>
    </citation>
    <scope>NUCLEOTIDE SEQUENCE [MRNA]</scope>
    <source>
        <tissue>Venom gland</tissue>
    </source>
</reference>
<evidence type="ECO:0000250" key="1"/>
<evidence type="ECO:0000250" key="2">
    <source>
        <dbReference type="UniProtKB" id="P46066"/>
    </source>
</evidence>
<evidence type="ECO:0000255" key="3"/>
<evidence type="ECO:0000255" key="4">
    <source>
        <dbReference type="PROSITE-ProRule" id="PRU01210"/>
    </source>
</evidence>
<evidence type="ECO:0000305" key="5"/>
<evidence type="ECO:0000305" key="6">
    <source>
    </source>
</evidence>
<evidence type="ECO:0000312" key="7">
    <source>
        <dbReference type="EMBL" id="ADV16825.1"/>
    </source>
</evidence>
<name>SCX16_RHOJU</name>
<protein>
    <recommendedName>
        <fullName evidence="6">Putative alpha-neurotoxin RjAa16</fullName>
    </recommendedName>
</protein>
<feature type="chain" id="PRO_0000413449" description="Putative alpha-neurotoxin RjAa16">
    <location>
        <begin position="1"/>
        <end position="66"/>
    </location>
</feature>
<feature type="domain" description="LCN-type CS-alpha/beta" evidence="4">
    <location>
        <begin position="1"/>
        <end position="60"/>
    </location>
</feature>
<feature type="disulfide bond" evidence="4">
    <location>
        <begin position="11"/>
        <end position="59"/>
    </location>
</feature>
<feature type="disulfide bond" evidence="4">
    <location>
        <begin position="15"/>
        <end position="35"/>
    </location>
</feature>
<feature type="disulfide bond" evidence="4">
    <location>
        <begin position="21"/>
        <end position="42"/>
    </location>
</feature>
<feature type="disulfide bond" evidence="4">
    <location>
        <begin position="25"/>
        <end position="44"/>
    </location>
</feature>
<feature type="non-terminal residue" evidence="7">
    <location>
        <position position="1"/>
    </location>
</feature>
<sequence length="66" mass="7624">KEGYPVDWGNCKYECMSDAYCKDLCVDRKAKSGYCYKLNWFCYCEGLPDDSPIKTNGHCRPGGRRK</sequence>
<organism>
    <name type="scientific">Rhopalurus junceus</name>
    <name type="common">Caribbean blue scorpion</name>
    <dbReference type="NCBI Taxonomy" id="419285"/>
    <lineage>
        <taxon>Eukaryota</taxon>
        <taxon>Metazoa</taxon>
        <taxon>Ecdysozoa</taxon>
        <taxon>Arthropoda</taxon>
        <taxon>Chelicerata</taxon>
        <taxon>Arachnida</taxon>
        <taxon>Scorpiones</taxon>
        <taxon>Buthida</taxon>
        <taxon>Buthoidea</taxon>
        <taxon>Buthidae</taxon>
        <taxon>Rhopalurus</taxon>
    </lineage>
</organism>